<dbReference type="EC" id="2.4.2.7" evidence="1"/>
<dbReference type="EMBL" id="AE008691">
    <property type="protein sequence ID" value="AAM24424.1"/>
    <property type="molecule type" value="Genomic_DNA"/>
</dbReference>
<dbReference type="RefSeq" id="WP_009610921.1">
    <property type="nucleotide sequence ID" value="NC_003869.1"/>
</dbReference>
<dbReference type="SMR" id="Q8RAL9"/>
<dbReference type="STRING" id="273068.TTE1194"/>
<dbReference type="KEGG" id="tte:TTE1194"/>
<dbReference type="eggNOG" id="COG0503">
    <property type="taxonomic scope" value="Bacteria"/>
</dbReference>
<dbReference type="HOGENOM" id="CLU_063339_3_0_9"/>
<dbReference type="OrthoDB" id="9803963at2"/>
<dbReference type="UniPathway" id="UPA00588">
    <property type="reaction ID" value="UER00646"/>
</dbReference>
<dbReference type="Proteomes" id="UP000000555">
    <property type="component" value="Chromosome"/>
</dbReference>
<dbReference type="GO" id="GO:0005737">
    <property type="term" value="C:cytoplasm"/>
    <property type="evidence" value="ECO:0007669"/>
    <property type="project" value="UniProtKB-SubCell"/>
</dbReference>
<dbReference type="GO" id="GO:0002055">
    <property type="term" value="F:adenine binding"/>
    <property type="evidence" value="ECO:0007669"/>
    <property type="project" value="TreeGrafter"/>
</dbReference>
<dbReference type="GO" id="GO:0003999">
    <property type="term" value="F:adenine phosphoribosyltransferase activity"/>
    <property type="evidence" value="ECO:0007669"/>
    <property type="project" value="UniProtKB-UniRule"/>
</dbReference>
<dbReference type="GO" id="GO:0016208">
    <property type="term" value="F:AMP binding"/>
    <property type="evidence" value="ECO:0007669"/>
    <property type="project" value="TreeGrafter"/>
</dbReference>
<dbReference type="GO" id="GO:0006168">
    <property type="term" value="P:adenine salvage"/>
    <property type="evidence" value="ECO:0007669"/>
    <property type="project" value="InterPro"/>
</dbReference>
<dbReference type="GO" id="GO:0044209">
    <property type="term" value="P:AMP salvage"/>
    <property type="evidence" value="ECO:0007669"/>
    <property type="project" value="UniProtKB-UniRule"/>
</dbReference>
<dbReference type="GO" id="GO:0006166">
    <property type="term" value="P:purine ribonucleoside salvage"/>
    <property type="evidence" value="ECO:0007669"/>
    <property type="project" value="UniProtKB-KW"/>
</dbReference>
<dbReference type="CDD" id="cd06223">
    <property type="entry name" value="PRTases_typeI"/>
    <property type="match status" value="1"/>
</dbReference>
<dbReference type="FunFam" id="3.40.50.2020:FF:000004">
    <property type="entry name" value="Adenine phosphoribosyltransferase"/>
    <property type="match status" value="1"/>
</dbReference>
<dbReference type="Gene3D" id="3.40.50.2020">
    <property type="match status" value="1"/>
</dbReference>
<dbReference type="HAMAP" id="MF_00004">
    <property type="entry name" value="Aden_phosphoribosyltr"/>
    <property type="match status" value="1"/>
</dbReference>
<dbReference type="InterPro" id="IPR005764">
    <property type="entry name" value="Ade_phspho_trans"/>
</dbReference>
<dbReference type="InterPro" id="IPR000836">
    <property type="entry name" value="PRibTrfase_dom"/>
</dbReference>
<dbReference type="InterPro" id="IPR029057">
    <property type="entry name" value="PRTase-like"/>
</dbReference>
<dbReference type="InterPro" id="IPR050054">
    <property type="entry name" value="UPRTase/APRTase"/>
</dbReference>
<dbReference type="NCBIfam" id="TIGR01090">
    <property type="entry name" value="apt"/>
    <property type="match status" value="1"/>
</dbReference>
<dbReference type="NCBIfam" id="NF002633">
    <property type="entry name" value="PRK02304.1-2"/>
    <property type="match status" value="1"/>
</dbReference>
<dbReference type="NCBIfam" id="NF002634">
    <property type="entry name" value="PRK02304.1-3"/>
    <property type="match status" value="1"/>
</dbReference>
<dbReference type="NCBIfam" id="NF002636">
    <property type="entry name" value="PRK02304.1-5"/>
    <property type="match status" value="1"/>
</dbReference>
<dbReference type="PANTHER" id="PTHR32315">
    <property type="entry name" value="ADENINE PHOSPHORIBOSYLTRANSFERASE"/>
    <property type="match status" value="1"/>
</dbReference>
<dbReference type="PANTHER" id="PTHR32315:SF3">
    <property type="entry name" value="ADENINE PHOSPHORIBOSYLTRANSFERASE"/>
    <property type="match status" value="1"/>
</dbReference>
<dbReference type="Pfam" id="PF00156">
    <property type="entry name" value="Pribosyltran"/>
    <property type="match status" value="1"/>
</dbReference>
<dbReference type="SUPFAM" id="SSF53271">
    <property type="entry name" value="PRTase-like"/>
    <property type="match status" value="1"/>
</dbReference>
<dbReference type="PROSITE" id="PS00103">
    <property type="entry name" value="PUR_PYR_PR_TRANSFER"/>
    <property type="match status" value="1"/>
</dbReference>
<reference key="1">
    <citation type="journal article" date="2002" name="Genome Res.">
        <title>A complete sequence of the T. tengcongensis genome.</title>
        <authorList>
            <person name="Bao Q."/>
            <person name="Tian Y."/>
            <person name="Li W."/>
            <person name="Xu Z."/>
            <person name="Xuan Z."/>
            <person name="Hu S."/>
            <person name="Dong W."/>
            <person name="Yang J."/>
            <person name="Chen Y."/>
            <person name="Xue Y."/>
            <person name="Xu Y."/>
            <person name="Lai X."/>
            <person name="Huang L."/>
            <person name="Dong X."/>
            <person name="Ma Y."/>
            <person name="Ling L."/>
            <person name="Tan H."/>
            <person name="Chen R."/>
            <person name="Wang J."/>
            <person name="Yu J."/>
            <person name="Yang H."/>
        </authorList>
    </citation>
    <scope>NUCLEOTIDE SEQUENCE [LARGE SCALE GENOMIC DNA]</scope>
    <source>
        <strain>DSM 15242 / JCM 11007 / NBRC 100824 / MB4</strain>
    </source>
</reference>
<protein>
    <recommendedName>
        <fullName evidence="1">Adenine phosphoribosyltransferase</fullName>
        <shortName evidence="1">APRT</shortName>
        <ecNumber evidence="1">2.4.2.7</ecNumber>
    </recommendedName>
</protein>
<sequence length="173" mass="19157">MTLDDIKEMIREIPDFPKKGIRFKDITPVLKDAKAFNYSIEMLAKALEGRKFDLIAAPEARGFLFGAPLAFRLGVGFVPVRKPGKLPAETLSYEYELEYGLDSLEIHKDAVVKGQRVVIVDDLLATGGTVYASAKLVESLGGVVDSILFLTELTFLDGRKKLDGYDIISLIKF</sequence>
<proteinExistence type="inferred from homology"/>
<evidence type="ECO:0000255" key="1">
    <source>
        <dbReference type="HAMAP-Rule" id="MF_00004"/>
    </source>
</evidence>
<accession>Q8RAL9</accession>
<organism>
    <name type="scientific">Caldanaerobacter subterraneus subsp. tengcongensis (strain DSM 15242 / JCM 11007 / NBRC 100824 / MB4)</name>
    <name type="common">Thermoanaerobacter tengcongensis</name>
    <dbReference type="NCBI Taxonomy" id="273068"/>
    <lineage>
        <taxon>Bacteria</taxon>
        <taxon>Bacillati</taxon>
        <taxon>Bacillota</taxon>
        <taxon>Clostridia</taxon>
        <taxon>Thermoanaerobacterales</taxon>
        <taxon>Thermoanaerobacteraceae</taxon>
        <taxon>Caldanaerobacter</taxon>
    </lineage>
</organism>
<keyword id="KW-0963">Cytoplasm</keyword>
<keyword id="KW-0328">Glycosyltransferase</keyword>
<keyword id="KW-0660">Purine salvage</keyword>
<keyword id="KW-1185">Reference proteome</keyword>
<keyword id="KW-0808">Transferase</keyword>
<name>APT_CALS4</name>
<gene>
    <name evidence="1" type="primary">apt</name>
    <name type="ordered locus">TTE1194</name>
</gene>
<comment type="function">
    <text evidence="1">Catalyzes a salvage reaction resulting in the formation of AMP, that is energically less costly than de novo synthesis.</text>
</comment>
<comment type="catalytic activity">
    <reaction evidence="1">
        <text>AMP + diphosphate = 5-phospho-alpha-D-ribose 1-diphosphate + adenine</text>
        <dbReference type="Rhea" id="RHEA:16609"/>
        <dbReference type="ChEBI" id="CHEBI:16708"/>
        <dbReference type="ChEBI" id="CHEBI:33019"/>
        <dbReference type="ChEBI" id="CHEBI:58017"/>
        <dbReference type="ChEBI" id="CHEBI:456215"/>
        <dbReference type="EC" id="2.4.2.7"/>
    </reaction>
</comment>
<comment type="pathway">
    <text evidence="1">Purine metabolism; AMP biosynthesis via salvage pathway; AMP from adenine: step 1/1.</text>
</comment>
<comment type="subunit">
    <text evidence="1">Homodimer.</text>
</comment>
<comment type="subcellular location">
    <subcellularLocation>
        <location evidence="1">Cytoplasm</location>
    </subcellularLocation>
</comment>
<comment type="similarity">
    <text evidence="1">Belongs to the purine/pyrimidine phosphoribosyltransferase family.</text>
</comment>
<feature type="chain" id="PRO_0000149479" description="Adenine phosphoribosyltransferase">
    <location>
        <begin position="1"/>
        <end position="173"/>
    </location>
</feature>